<protein>
    <recommendedName>
        <fullName evidence="1">Ribosomal RNA small subunit methyltransferase H</fullName>
        <ecNumber evidence="1">2.1.1.199</ecNumber>
    </recommendedName>
    <alternativeName>
        <fullName evidence="1">16S rRNA m(4)C1402 methyltransferase</fullName>
    </alternativeName>
    <alternativeName>
        <fullName evidence="1">rRNA (cytosine-N(4)-)-methyltransferase RsmH</fullName>
    </alternativeName>
</protein>
<comment type="function">
    <text evidence="1">Specifically methylates the N4 position of cytidine in position 1402 (C1402) of 16S rRNA.</text>
</comment>
<comment type="catalytic activity">
    <reaction evidence="1">
        <text>cytidine(1402) in 16S rRNA + S-adenosyl-L-methionine = N(4)-methylcytidine(1402) in 16S rRNA + S-adenosyl-L-homocysteine + H(+)</text>
        <dbReference type="Rhea" id="RHEA:42928"/>
        <dbReference type="Rhea" id="RHEA-COMP:10286"/>
        <dbReference type="Rhea" id="RHEA-COMP:10287"/>
        <dbReference type="ChEBI" id="CHEBI:15378"/>
        <dbReference type="ChEBI" id="CHEBI:57856"/>
        <dbReference type="ChEBI" id="CHEBI:59789"/>
        <dbReference type="ChEBI" id="CHEBI:74506"/>
        <dbReference type="ChEBI" id="CHEBI:82748"/>
        <dbReference type="EC" id="2.1.1.199"/>
    </reaction>
</comment>
<comment type="subcellular location">
    <subcellularLocation>
        <location evidence="1">Cytoplasm</location>
    </subcellularLocation>
</comment>
<comment type="similarity">
    <text evidence="1">Belongs to the methyltransferase superfamily. RsmH family.</text>
</comment>
<sequence length="323" mass="34655">MNAITLVHSGHVPVMLHEVLEALSPRAGGRYLDGTFGGGGYARAILNAADCTLDAIDRDPAAIERGNAMAVQANGRLRMHQGTFGDMEALAGAEGPFDGIVLDLGVSSFQIDQAERGFSFRNDGPLDMRMGSDGPSAADLVNTCKEAELADILYRYGEEKLSRRIARAIVAARAEAPITTTGQLAHIIRCCVPRDRANIDPATRSFQGLRIAVNDELGELERALEAAPRLLAPGGIFVVVTFHSLEDRLAKRAMAVLAGRTGNPSRYEPAPLRQEAPAFSLLYSRPLSATDEESRENPRARSARLRALVCNPAPKMPVSGMPS</sequence>
<name>RSMH_GLUOX</name>
<gene>
    <name evidence="1" type="primary">rsmH</name>
    <name type="synonym">mraW</name>
    <name type="ordered locus">GOX0150</name>
</gene>
<keyword id="KW-0963">Cytoplasm</keyword>
<keyword id="KW-0489">Methyltransferase</keyword>
<keyword id="KW-1185">Reference proteome</keyword>
<keyword id="KW-0698">rRNA processing</keyword>
<keyword id="KW-0949">S-adenosyl-L-methionine</keyword>
<keyword id="KW-0808">Transferase</keyword>
<organism>
    <name type="scientific">Gluconobacter oxydans (strain 621H)</name>
    <name type="common">Gluconobacter suboxydans</name>
    <dbReference type="NCBI Taxonomy" id="290633"/>
    <lineage>
        <taxon>Bacteria</taxon>
        <taxon>Pseudomonadati</taxon>
        <taxon>Pseudomonadota</taxon>
        <taxon>Alphaproteobacteria</taxon>
        <taxon>Acetobacterales</taxon>
        <taxon>Acetobacteraceae</taxon>
        <taxon>Gluconobacter</taxon>
    </lineage>
</organism>
<accession>Q5FUK3</accession>
<dbReference type="EC" id="2.1.1.199" evidence="1"/>
<dbReference type="EMBL" id="CP000009">
    <property type="protein sequence ID" value="AAW59943.1"/>
    <property type="molecule type" value="Genomic_DNA"/>
</dbReference>
<dbReference type="RefSeq" id="WP_011251746.1">
    <property type="nucleotide sequence ID" value="NC_006677.1"/>
</dbReference>
<dbReference type="SMR" id="Q5FUK3"/>
<dbReference type="STRING" id="290633.GOX0150"/>
<dbReference type="KEGG" id="gox:GOX0150"/>
<dbReference type="eggNOG" id="COG0275">
    <property type="taxonomic scope" value="Bacteria"/>
</dbReference>
<dbReference type="HOGENOM" id="CLU_038422_1_1_5"/>
<dbReference type="Proteomes" id="UP000006375">
    <property type="component" value="Chromosome"/>
</dbReference>
<dbReference type="GO" id="GO:0005737">
    <property type="term" value="C:cytoplasm"/>
    <property type="evidence" value="ECO:0007669"/>
    <property type="project" value="UniProtKB-SubCell"/>
</dbReference>
<dbReference type="GO" id="GO:0071424">
    <property type="term" value="F:rRNA (cytosine-N4-)-methyltransferase activity"/>
    <property type="evidence" value="ECO:0007669"/>
    <property type="project" value="UniProtKB-UniRule"/>
</dbReference>
<dbReference type="GO" id="GO:0070475">
    <property type="term" value="P:rRNA base methylation"/>
    <property type="evidence" value="ECO:0007669"/>
    <property type="project" value="UniProtKB-UniRule"/>
</dbReference>
<dbReference type="CDD" id="cd02440">
    <property type="entry name" value="AdoMet_MTases"/>
    <property type="match status" value="1"/>
</dbReference>
<dbReference type="FunFam" id="1.10.150.170:FF:000003">
    <property type="entry name" value="Ribosomal RNA small subunit methyltransferase H"/>
    <property type="match status" value="1"/>
</dbReference>
<dbReference type="Gene3D" id="1.10.150.170">
    <property type="entry name" value="Putative methyltransferase TM0872, insert domain"/>
    <property type="match status" value="1"/>
</dbReference>
<dbReference type="Gene3D" id="3.40.50.150">
    <property type="entry name" value="Vaccinia Virus protein VP39"/>
    <property type="match status" value="1"/>
</dbReference>
<dbReference type="HAMAP" id="MF_01007">
    <property type="entry name" value="16SrRNA_methyltr_H"/>
    <property type="match status" value="1"/>
</dbReference>
<dbReference type="InterPro" id="IPR002903">
    <property type="entry name" value="RsmH"/>
</dbReference>
<dbReference type="InterPro" id="IPR023397">
    <property type="entry name" value="SAM-dep_MeTrfase_MraW_recog"/>
</dbReference>
<dbReference type="InterPro" id="IPR029063">
    <property type="entry name" value="SAM-dependent_MTases_sf"/>
</dbReference>
<dbReference type="NCBIfam" id="TIGR00006">
    <property type="entry name" value="16S rRNA (cytosine(1402)-N(4))-methyltransferase RsmH"/>
    <property type="match status" value="1"/>
</dbReference>
<dbReference type="PANTHER" id="PTHR11265:SF0">
    <property type="entry name" value="12S RRNA N4-METHYLCYTIDINE METHYLTRANSFERASE"/>
    <property type="match status" value="1"/>
</dbReference>
<dbReference type="PANTHER" id="PTHR11265">
    <property type="entry name" value="S-ADENOSYL-METHYLTRANSFERASE MRAW"/>
    <property type="match status" value="1"/>
</dbReference>
<dbReference type="Pfam" id="PF01795">
    <property type="entry name" value="Methyltransf_5"/>
    <property type="match status" value="1"/>
</dbReference>
<dbReference type="PIRSF" id="PIRSF004486">
    <property type="entry name" value="MraW"/>
    <property type="match status" value="1"/>
</dbReference>
<dbReference type="SUPFAM" id="SSF81799">
    <property type="entry name" value="Putative methyltransferase TM0872, insert domain"/>
    <property type="match status" value="1"/>
</dbReference>
<dbReference type="SUPFAM" id="SSF53335">
    <property type="entry name" value="S-adenosyl-L-methionine-dependent methyltransferases"/>
    <property type="match status" value="1"/>
</dbReference>
<evidence type="ECO:0000255" key="1">
    <source>
        <dbReference type="HAMAP-Rule" id="MF_01007"/>
    </source>
</evidence>
<proteinExistence type="inferred from homology"/>
<reference key="1">
    <citation type="journal article" date="2005" name="Nat. Biotechnol.">
        <title>Complete genome sequence of the acetic acid bacterium Gluconobacter oxydans.</title>
        <authorList>
            <person name="Prust C."/>
            <person name="Hoffmeister M."/>
            <person name="Liesegang H."/>
            <person name="Wiezer A."/>
            <person name="Fricke W.F."/>
            <person name="Ehrenreich A."/>
            <person name="Gottschalk G."/>
            <person name="Deppenmeier U."/>
        </authorList>
    </citation>
    <scope>NUCLEOTIDE SEQUENCE [LARGE SCALE GENOMIC DNA]</scope>
    <source>
        <strain>621H</strain>
    </source>
</reference>
<feature type="chain" id="PRO_0000108633" description="Ribosomal RNA small subunit methyltransferase H">
    <location>
        <begin position="1"/>
        <end position="323"/>
    </location>
</feature>
<feature type="binding site" evidence="1">
    <location>
        <begin position="39"/>
        <end position="41"/>
    </location>
    <ligand>
        <name>S-adenosyl-L-methionine</name>
        <dbReference type="ChEBI" id="CHEBI:59789"/>
    </ligand>
</feature>
<feature type="binding site" evidence="1">
    <location>
        <position position="57"/>
    </location>
    <ligand>
        <name>S-adenosyl-L-methionine</name>
        <dbReference type="ChEBI" id="CHEBI:59789"/>
    </ligand>
</feature>
<feature type="binding site" evidence="1">
    <location>
        <position position="84"/>
    </location>
    <ligand>
        <name>S-adenosyl-L-methionine</name>
        <dbReference type="ChEBI" id="CHEBI:59789"/>
    </ligand>
</feature>
<feature type="binding site" evidence="1">
    <location>
        <position position="103"/>
    </location>
    <ligand>
        <name>S-adenosyl-L-methionine</name>
        <dbReference type="ChEBI" id="CHEBI:59789"/>
    </ligand>
</feature>
<feature type="binding site" evidence="1">
    <location>
        <position position="110"/>
    </location>
    <ligand>
        <name>S-adenosyl-L-methionine</name>
        <dbReference type="ChEBI" id="CHEBI:59789"/>
    </ligand>
</feature>